<feature type="chain" id="PRO_0000365049" description="Eukaryotic translation initiation factor 3 subunit K">
    <location>
        <begin position="1"/>
        <end position="222"/>
    </location>
</feature>
<feature type="domain" description="PCI" evidence="2">
    <location>
        <begin position="46"/>
        <end position="208"/>
    </location>
</feature>
<reference key="1">
    <citation type="journal article" date="2007" name="Nature">
        <title>Evolution of genes and genomes on the Drosophila phylogeny.</title>
        <authorList>
            <consortium name="Drosophila 12 genomes consortium"/>
        </authorList>
    </citation>
    <scope>NUCLEOTIDE SEQUENCE [LARGE SCALE GENOMIC DNA]</scope>
    <source>
        <strain>Tai18E2 / Tucson 14021-0261.01</strain>
    </source>
</reference>
<reference key="2">
    <citation type="journal article" date="2003" name="Genome Res.">
        <title>An evolutionary analysis of orphan genes in Drosophila.</title>
        <authorList>
            <person name="Domazet-Loso T."/>
            <person name="Tautz D."/>
        </authorList>
    </citation>
    <scope>NUCLEOTIDE SEQUENCE [MRNA] OF 1-185</scope>
</reference>
<gene>
    <name type="ORF">GE12213</name>
</gene>
<protein>
    <recommendedName>
        <fullName evidence="1">Eukaryotic translation initiation factor 3 subunit K</fullName>
        <shortName evidence="1">eIF3k</shortName>
    </recommendedName>
    <alternativeName>
        <fullName evidence="1">eIF-3 p25</fullName>
    </alternativeName>
</protein>
<sequence length="222" mass="25588">MSHLVKMENGQSQTIQEMLGCIERYNPDHLKTLEAYVQDQAKNNTYDLEANLAVLKLYQFNPHMLNFDITYTILLKSLTSLPHTDFVMAKCLLLPQQMKDENVQTIIDLADILERADFTLFWQRAEVNRSMFRHIAGFHDSIRKFVSHVVGTTFQTIRKDLLKELLGGIEDSTLESWIKRNGWKHQGQGLVVVAMQDDKIKTKNITEKIEFDNVGGLMAQCL</sequence>
<accession>B4P8V1</accession>
<accession>Q6XIW3</accession>
<comment type="function">
    <text evidence="1">Component of the eukaryotic translation initiation factor 3 (eIF-3) complex, which is involved in protein synthesis of a specialized repertoire of mRNAs and, together with other initiation factors, stimulates binding of mRNA and methionyl-tRNAi to the 40S ribosome. The eIF-3 complex specifically targets and initiates translation of a subset of mRNAs involved in cell proliferation.</text>
</comment>
<comment type="subunit">
    <text evidence="1">Component of the eukaryotic translation initiation factor 3 (eIF-3) complex. The eIF-3 complex interacts with pix.</text>
</comment>
<comment type="subcellular location">
    <subcellularLocation>
        <location evidence="1">Cytoplasm</location>
    </subcellularLocation>
</comment>
<comment type="similarity">
    <text evidence="1">Belongs to the eIF-3 subunit K family.</text>
</comment>
<proteinExistence type="evidence at transcript level"/>
<name>EIF3K_DROYA</name>
<dbReference type="EMBL" id="CM000158">
    <property type="protein sequence ID" value="EDW91205.1"/>
    <property type="molecule type" value="Genomic_DNA"/>
</dbReference>
<dbReference type="EMBL" id="AY231716">
    <property type="protein sequence ID" value="AAR09739.1"/>
    <property type="molecule type" value="mRNA"/>
</dbReference>
<dbReference type="SMR" id="B4P8V1"/>
<dbReference type="EnsemblMetazoa" id="FBtr0258731">
    <property type="protein sequence ID" value="FBpp0257223"/>
    <property type="gene ID" value="FBgn0068513"/>
</dbReference>
<dbReference type="EnsemblMetazoa" id="XM_002091457.4">
    <property type="protein sequence ID" value="XP_002091493.1"/>
    <property type="gene ID" value="LOC6530580"/>
</dbReference>
<dbReference type="GeneID" id="6530580"/>
<dbReference type="KEGG" id="dya:Dyak_GE12213"/>
<dbReference type="CTD" id="27335"/>
<dbReference type="eggNOG" id="KOG3252">
    <property type="taxonomic scope" value="Eukaryota"/>
</dbReference>
<dbReference type="HOGENOM" id="CLU_076723_1_0_1"/>
<dbReference type="OMA" id="WKHQGQG"/>
<dbReference type="OrthoDB" id="337745at2759"/>
<dbReference type="PhylomeDB" id="B4P8V1"/>
<dbReference type="Proteomes" id="UP000002282">
    <property type="component" value="Chromosome 2R"/>
</dbReference>
<dbReference type="GO" id="GO:0016282">
    <property type="term" value="C:eukaryotic 43S preinitiation complex"/>
    <property type="evidence" value="ECO:0007669"/>
    <property type="project" value="UniProtKB-UniRule"/>
</dbReference>
<dbReference type="GO" id="GO:0033290">
    <property type="term" value="C:eukaryotic 48S preinitiation complex"/>
    <property type="evidence" value="ECO:0007669"/>
    <property type="project" value="UniProtKB-UniRule"/>
</dbReference>
<dbReference type="GO" id="GO:0005852">
    <property type="term" value="C:eukaryotic translation initiation factor 3 complex"/>
    <property type="evidence" value="ECO:0007669"/>
    <property type="project" value="UniProtKB-UniRule"/>
</dbReference>
<dbReference type="GO" id="GO:0043022">
    <property type="term" value="F:ribosome binding"/>
    <property type="evidence" value="ECO:0007669"/>
    <property type="project" value="InterPro"/>
</dbReference>
<dbReference type="GO" id="GO:0003723">
    <property type="term" value="F:RNA binding"/>
    <property type="evidence" value="ECO:0007669"/>
    <property type="project" value="UniProtKB-UniRule"/>
</dbReference>
<dbReference type="GO" id="GO:0003743">
    <property type="term" value="F:translation initiation factor activity"/>
    <property type="evidence" value="ECO:0007669"/>
    <property type="project" value="UniProtKB-UniRule"/>
</dbReference>
<dbReference type="GO" id="GO:0001732">
    <property type="term" value="P:formation of cytoplasmic translation initiation complex"/>
    <property type="evidence" value="ECO:0007669"/>
    <property type="project" value="UniProtKB-UniRule"/>
</dbReference>
<dbReference type="GO" id="GO:0006446">
    <property type="term" value="P:regulation of translational initiation"/>
    <property type="evidence" value="ECO:0007669"/>
    <property type="project" value="InterPro"/>
</dbReference>
<dbReference type="FunFam" id="1.10.10.10:FF:000212">
    <property type="entry name" value="Eukaryotic translation initiation factor 3 subunit K"/>
    <property type="match status" value="1"/>
</dbReference>
<dbReference type="FunFam" id="1.25.40.250:FF:000001">
    <property type="entry name" value="Eukaryotic translation initiation factor 3 subunit K"/>
    <property type="match status" value="1"/>
</dbReference>
<dbReference type="Gene3D" id="1.25.40.250">
    <property type="entry name" value="ARM repeat, domain 1"/>
    <property type="match status" value="1"/>
</dbReference>
<dbReference type="Gene3D" id="1.10.10.10">
    <property type="entry name" value="Winged helix-like DNA-binding domain superfamily/Winged helix DNA-binding domain"/>
    <property type="match status" value="1"/>
</dbReference>
<dbReference type="HAMAP" id="MF_03010">
    <property type="entry name" value="eIF3k"/>
    <property type="match status" value="1"/>
</dbReference>
<dbReference type="InterPro" id="IPR016024">
    <property type="entry name" value="ARM-type_fold"/>
</dbReference>
<dbReference type="InterPro" id="IPR033464">
    <property type="entry name" value="CSN8_PSD8_EIF3K"/>
</dbReference>
<dbReference type="InterPro" id="IPR009374">
    <property type="entry name" value="eIF3k"/>
</dbReference>
<dbReference type="InterPro" id="IPR000717">
    <property type="entry name" value="PCI_dom"/>
</dbReference>
<dbReference type="InterPro" id="IPR016020">
    <property type="entry name" value="Transl_init_fac_sub12_N_euk"/>
</dbReference>
<dbReference type="InterPro" id="IPR036388">
    <property type="entry name" value="WH-like_DNA-bd_sf"/>
</dbReference>
<dbReference type="InterPro" id="IPR036390">
    <property type="entry name" value="WH_DNA-bd_sf"/>
</dbReference>
<dbReference type="PANTHER" id="PTHR13022">
    <property type="entry name" value="EUKARYOTIC TRANSLATION INITIATION FACTOR 3 SUBUNIT 11"/>
    <property type="match status" value="1"/>
</dbReference>
<dbReference type="PANTHER" id="PTHR13022:SF0">
    <property type="entry name" value="EUKARYOTIC TRANSLATION INITIATION FACTOR 3 SUBUNIT K"/>
    <property type="match status" value="1"/>
</dbReference>
<dbReference type="Pfam" id="PF10075">
    <property type="entry name" value="CSN8_PSD8_EIF3K"/>
    <property type="match status" value="1"/>
</dbReference>
<dbReference type="SUPFAM" id="SSF48371">
    <property type="entry name" value="ARM repeat"/>
    <property type="match status" value="1"/>
</dbReference>
<dbReference type="SUPFAM" id="SSF46785">
    <property type="entry name" value="Winged helix' DNA-binding domain"/>
    <property type="match status" value="1"/>
</dbReference>
<dbReference type="PROSITE" id="PS50250">
    <property type="entry name" value="PCI"/>
    <property type="match status" value="1"/>
</dbReference>
<keyword id="KW-0963">Cytoplasm</keyword>
<keyword id="KW-0396">Initiation factor</keyword>
<keyword id="KW-0648">Protein biosynthesis</keyword>
<evidence type="ECO:0000255" key="1">
    <source>
        <dbReference type="HAMAP-Rule" id="MF_03010"/>
    </source>
</evidence>
<evidence type="ECO:0000255" key="2">
    <source>
        <dbReference type="PROSITE-ProRule" id="PRU01185"/>
    </source>
</evidence>
<organism>
    <name type="scientific">Drosophila yakuba</name>
    <name type="common">Fruit fly</name>
    <dbReference type="NCBI Taxonomy" id="7245"/>
    <lineage>
        <taxon>Eukaryota</taxon>
        <taxon>Metazoa</taxon>
        <taxon>Ecdysozoa</taxon>
        <taxon>Arthropoda</taxon>
        <taxon>Hexapoda</taxon>
        <taxon>Insecta</taxon>
        <taxon>Pterygota</taxon>
        <taxon>Neoptera</taxon>
        <taxon>Endopterygota</taxon>
        <taxon>Diptera</taxon>
        <taxon>Brachycera</taxon>
        <taxon>Muscomorpha</taxon>
        <taxon>Ephydroidea</taxon>
        <taxon>Drosophilidae</taxon>
        <taxon>Drosophila</taxon>
        <taxon>Sophophora</taxon>
    </lineage>
</organism>